<dbReference type="EMBL" id="CP000771">
    <property type="protein sequence ID" value="ABS60654.1"/>
    <property type="molecule type" value="Genomic_DNA"/>
</dbReference>
<dbReference type="RefSeq" id="WP_011993970.1">
    <property type="nucleotide sequence ID" value="NC_009718.1"/>
</dbReference>
<dbReference type="SMR" id="A7HL71"/>
<dbReference type="STRING" id="381764.Fnod_0801"/>
<dbReference type="KEGG" id="fno:Fnod_0801"/>
<dbReference type="eggNOG" id="COG0632">
    <property type="taxonomic scope" value="Bacteria"/>
</dbReference>
<dbReference type="HOGENOM" id="CLU_087936_3_0_0"/>
<dbReference type="OrthoDB" id="5293449at2"/>
<dbReference type="Proteomes" id="UP000002415">
    <property type="component" value="Chromosome"/>
</dbReference>
<dbReference type="GO" id="GO:0005737">
    <property type="term" value="C:cytoplasm"/>
    <property type="evidence" value="ECO:0007669"/>
    <property type="project" value="UniProtKB-SubCell"/>
</dbReference>
<dbReference type="GO" id="GO:0009379">
    <property type="term" value="C:Holliday junction helicase complex"/>
    <property type="evidence" value="ECO:0007669"/>
    <property type="project" value="InterPro"/>
</dbReference>
<dbReference type="GO" id="GO:0048476">
    <property type="term" value="C:Holliday junction resolvase complex"/>
    <property type="evidence" value="ECO:0007669"/>
    <property type="project" value="UniProtKB-UniRule"/>
</dbReference>
<dbReference type="GO" id="GO:0005524">
    <property type="term" value="F:ATP binding"/>
    <property type="evidence" value="ECO:0007669"/>
    <property type="project" value="InterPro"/>
</dbReference>
<dbReference type="GO" id="GO:0000400">
    <property type="term" value="F:four-way junction DNA binding"/>
    <property type="evidence" value="ECO:0007669"/>
    <property type="project" value="UniProtKB-UniRule"/>
</dbReference>
<dbReference type="GO" id="GO:0009378">
    <property type="term" value="F:four-way junction helicase activity"/>
    <property type="evidence" value="ECO:0007669"/>
    <property type="project" value="InterPro"/>
</dbReference>
<dbReference type="GO" id="GO:0006310">
    <property type="term" value="P:DNA recombination"/>
    <property type="evidence" value="ECO:0007669"/>
    <property type="project" value="UniProtKB-UniRule"/>
</dbReference>
<dbReference type="GO" id="GO:0006281">
    <property type="term" value="P:DNA repair"/>
    <property type="evidence" value="ECO:0007669"/>
    <property type="project" value="UniProtKB-UniRule"/>
</dbReference>
<dbReference type="CDD" id="cd14332">
    <property type="entry name" value="UBA_RuvA_C"/>
    <property type="match status" value="1"/>
</dbReference>
<dbReference type="Gene3D" id="1.10.150.20">
    <property type="entry name" value="5' to 3' exonuclease, C-terminal subdomain"/>
    <property type="match status" value="1"/>
</dbReference>
<dbReference type="Gene3D" id="1.10.8.10">
    <property type="entry name" value="DNA helicase RuvA subunit, C-terminal domain"/>
    <property type="match status" value="1"/>
</dbReference>
<dbReference type="Gene3D" id="2.40.50.140">
    <property type="entry name" value="Nucleic acid-binding proteins"/>
    <property type="match status" value="1"/>
</dbReference>
<dbReference type="HAMAP" id="MF_00031">
    <property type="entry name" value="DNA_HJ_migration_RuvA"/>
    <property type="match status" value="1"/>
</dbReference>
<dbReference type="InterPro" id="IPR013849">
    <property type="entry name" value="DNA_helicase_Holl-junc_RuvA_I"/>
</dbReference>
<dbReference type="InterPro" id="IPR003583">
    <property type="entry name" value="Hlx-hairpin-Hlx_DNA-bd_motif"/>
</dbReference>
<dbReference type="InterPro" id="IPR012340">
    <property type="entry name" value="NA-bd_OB-fold"/>
</dbReference>
<dbReference type="InterPro" id="IPR000085">
    <property type="entry name" value="RuvA"/>
</dbReference>
<dbReference type="InterPro" id="IPR010994">
    <property type="entry name" value="RuvA_2-like"/>
</dbReference>
<dbReference type="InterPro" id="IPR011114">
    <property type="entry name" value="RuvA_C"/>
</dbReference>
<dbReference type="InterPro" id="IPR036267">
    <property type="entry name" value="RuvA_C_sf"/>
</dbReference>
<dbReference type="NCBIfam" id="TIGR00084">
    <property type="entry name" value="ruvA"/>
    <property type="match status" value="1"/>
</dbReference>
<dbReference type="Pfam" id="PF14520">
    <property type="entry name" value="HHH_5"/>
    <property type="match status" value="1"/>
</dbReference>
<dbReference type="Pfam" id="PF07499">
    <property type="entry name" value="RuvA_C"/>
    <property type="match status" value="1"/>
</dbReference>
<dbReference type="Pfam" id="PF01330">
    <property type="entry name" value="RuvA_N"/>
    <property type="match status" value="1"/>
</dbReference>
<dbReference type="SMART" id="SM00278">
    <property type="entry name" value="HhH1"/>
    <property type="match status" value="2"/>
</dbReference>
<dbReference type="SUPFAM" id="SSF46929">
    <property type="entry name" value="DNA helicase RuvA subunit, C-terminal domain"/>
    <property type="match status" value="1"/>
</dbReference>
<dbReference type="SUPFAM" id="SSF50249">
    <property type="entry name" value="Nucleic acid-binding proteins"/>
    <property type="match status" value="1"/>
</dbReference>
<dbReference type="SUPFAM" id="SSF47781">
    <property type="entry name" value="RuvA domain 2-like"/>
    <property type="match status" value="1"/>
</dbReference>
<sequence length="188" mass="20679">MIEIIEGIYKGRSEGKILVSINGVVFGIITDAESFSEFNEGDKILVYTKLIVSQEDMTIYGFDSKVKKETFEKLIKVSKLGPKTAIKILSSTTVDFLSNAIATGDVEKLSSIPGIGRKTAERMITELKDEFEVVEVNEEMLEAIEALVSLGYSKTQARNAVSKVLKESPNISNVSKIIKEALKILAKI</sequence>
<evidence type="ECO:0000255" key="1">
    <source>
        <dbReference type="HAMAP-Rule" id="MF_00031"/>
    </source>
</evidence>
<comment type="function">
    <text evidence="1">The RuvA-RuvB-RuvC complex processes Holliday junction (HJ) DNA during genetic recombination and DNA repair, while the RuvA-RuvB complex plays an important role in the rescue of blocked DNA replication forks via replication fork reversal (RFR). RuvA specifically binds to HJ cruciform DNA, conferring on it an open structure. The RuvB hexamer acts as an ATP-dependent pump, pulling dsDNA into and through the RuvAB complex. HJ branch migration allows RuvC to scan DNA until it finds its consensus sequence, where it cleaves and resolves the cruciform DNA.</text>
</comment>
<comment type="subunit">
    <text evidence="1">Homotetramer. Forms an RuvA(8)-RuvB(12)-Holliday junction (HJ) complex. HJ DNA is sandwiched between 2 RuvA tetramers; dsDNA enters through RuvA and exits via RuvB. An RuvB hexamer assembles on each DNA strand where it exits the tetramer. Each RuvB hexamer is contacted by two RuvA subunits (via domain III) on 2 adjacent RuvB subunits; this complex drives branch migration. In the full resolvosome a probable DNA-RuvA(4)-RuvB(12)-RuvC(2) complex forms which resolves the HJ.</text>
</comment>
<comment type="subcellular location">
    <subcellularLocation>
        <location evidence="1">Cytoplasm</location>
    </subcellularLocation>
</comment>
<comment type="domain">
    <text evidence="1">Has three domains with a flexible linker between the domains II and III and assumes an 'L' shape. Domain III is highly mobile and contacts RuvB.</text>
</comment>
<comment type="similarity">
    <text evidence="1">Belongs to the RuvA family.</text>
</comment>
<protein>
    <recommendedName>
        <fullName evidence="1">Holliday junction branch migration complex subunit RuvA</fullName>
    </recommendedName>
</protein>
<feature type="chain" id="PRO_1000071017" description="Holliday junction branch migration complex subunit RuvA">
    <location>
        <begin position="1"/>
        <end position="188"/>
    </location>
</feature>
<feature type="region of interest" description="Domain I" evidence="1">
    <location>
        <begin position="1"/>
        <end position="63"/>
    </location>
</feature>
<feature type="region of interest" description="Domain II" evidence="1">
    <location>
        <begin position="64"/>
        <end position="142"/>
    </location>
</feature>
<feature type="region of interest" description="Domain III" evidence="1">
    <location>
        <begin position="142"/>
        <end position="188"/>
    </location>
</feature>
<feature type="region of interest" description="Flexible linker" evidence="1">
    <location>
        <position position="142"/>
    </location>
</feature>
<organism>
    <name type="scientific">Fervidobacterium nodosum (strain ATCC 35602 / DSM 5306 / Rt17-B1)</name>
    <dbReference type="NCBI Taxonomy" id="381764"/>
    <lineage>
        <taxon>Bacteria</taxon>
        <taxon>Thermotogati</taxon>
        <taxon>Thermotogota</taxon>
        <taxon>Thermotogae</taxon>
        <taxon>Thermotogales</taxon>
        <taxon>Fervidobacteriaceae</taxon>
        <taxon>Fervidobacterium</taxon>
    </lineage>
</organism>
<keyword id="KW-0963">Cytoplasm</keyword>
<keyword id="KW-0227">DNA damage</keyword>
<keyword id="KW-0233">DNA recombination</keyword>
<keyword id="KW-0234">DNA repair</keyword>
<keyword id="KW-0238">DNA-binding</keyword>
<keyword id="KW-1185">Reference proteome</keyword>
<proteinExistence type="inferred from homology"/>
<reference key="1">
    <citation type="submission" date="2007-07" db="EMBL/GenBank/DDBJ databases">
        <title>Complete sequence of Fervidobacterium nodosum Rt17-B1.</title>
        <authorList>
            <consortium name="US DOE Joint Genome Institute"/>
            <person name="Copeland A."/>
            <person name="Lucas S."/>
            <person name="Lapidus A."/>
            <person name="Barry K."/>
            <person name="Glavina del Rio T."/>
            <person name="Dalin E."/>
            <person name="Tice H."/>
            <person name="Pitluck S."/>
            <person name="Saunders E."/>
            <person name="Brettin T."/>
            <person name="Bruce D."/>
            <person name="Detter J.C."/>
            <person name="Han C."/>
            <person name="Schmutz J."/>
            <person name="Larimer F."/>
            <person name="Land M."/>
            <person name="Hauser L."/>
            <person name="Kyrpides N."/>
            <person name="Mikhailova N."/>
            <person name="Nelson K."/>
            <person name="Gogarten J.P."/>
            <person name="Noll K."/>
            <person name="Richardson P."/>
        </authorList>
    </citation>
    <scope>NUCLEOTIDE SEQUENCE [LARGE SCALE GENOMIC DNA]</scope>
    <source>
        <strain>ATCC 35602 / DSM 5306 / Rt17-B1</strain>
    </source>
</reference>
<name>RUVA_FERNB</name>
<accession>A7HL71</accession>
<gene>
    <name evidence="1" type="primary">ruvA</name>
    <name type="ordered locus">Fnod_0801</name>
</gene>